<dbReference type="EC" id="2.1.1.163" evidence="1"/>
<dbReference type="EMBL" id="CP000560">
    <property type="protein sequence ID" value="ABS74453.1"/>
    <property type="molecule type" value="Genomic_DNA"/>
</dbReference>
<dbReference type="RefSeq" id="WP_003153453.1">
    <property type="nucleotide sequence ID" value="NC_009725.2"/>
</dbReference>
<dbReference type="SMR" id="A7Z627"/>
<dbReference type="GeneID" id="93081226"/>
<dbReference type="KEGG" id="bay:RBAM_020910"/>
<dbReference type="HOGENOM" id="CLU_037990_0_0_9"/>
<dbReference type="UniPathway" id="UPA00079">
    <property type="reaction ID" value="UER00169"/>
</dbReference>
<dbReference type="Proteomes" id="UP000001120">
    <property type="component" value="Chromosome"/>
</dbReference>
<dbReference type="GO" id="GO:0043770">
    <property type="term" value="F:demethylmenaquinone methyltransferase activity"/>
    <property type="evidence" value="ECO:0007669"/>
    <property type="project" value="UniProtKB-UniRule"/>
</dbReference>
<dbReference type="GO" id="GO:0009234">
    <property type="term" value="P:menaquinone biosynthetic process"/>
    <property type="evidence" value="ECO:0007669"/>
    <property type="project" value="UniProtKB-UniRule"/>
</dbReference>
<dbReference type="GO" id="GO:0032259">
    <property type="term" value="P:methylation"/>
    <property type="evidence" value="ECO:0007669"/>
    <property type="project" value="UniProtKB-KW"/>
</dbReference>
<dbReference type="CDD" id="cd02440">
    <property type="entry name" value="AdoMet_MTases"/>
    <property type="match status" value="1"/>
</dbReference>
<dbReference type="FunFam" id="3.40.50.150:FF:000086">
    <property type="entry name" value="Demethylmenaquinone methyltransferase"/>
    <property type="match status" value="1"/>
</dbReference>
<dbReference type="Gene3D" id="3.40.50.150">
    <property type="entry name" value="Vaccinia Virus protein VP39"/>
    <property type="match status" value="1"/>
</dbReference>
<dbReference type="HAMAP" id="MF_01813">
    <property type="entry name" value="MenG_UbiE_methyltr"/>
    <property type="match status" value="1"/>
</dbReference>
<dbReference type="InterPro" id="IPR014122">
    <property type="entry name" value="MenG_heptapren"/>
</dbReference>
<dbReference type="InterPro" id="IPR029063">
    <property type="entry name" value="SAM-dependent_MTases_sf"/>
</dbReference>
<dbReference type="InterPro" id="IPR004033">
    <property type="entry name" value="UbiE/COQ5_MeTrFase"/>
</dbReference>
<dbReference type="InterPro" id="IPR023576">
    <property type="entry name" value="UbiE/COQ5_MeTrFase_CS"/>
</dbReference>
<dbReference type="NCBIfam" id="TIGR02752">
    <property type="entry name" value="MenG_heptapren"/>
    <property type="match status" value="1"/>
</dbReference>
<dbReference type="NCBIfam" id="TIGR01934">
    <property type="entry name" value="MenG_MenH_UbiE"/>
    <property type="match status" value="1"/>
</dbReference>
<dbReference type="NCBIfam" id="NF001243">
    <property type="entry name" value="PRK00216.1-4"/>
    <property type="match status" value="1"/>
</dbReference>
<dbReference type="NCBIfam" id="NF001244">
    <property type="entry name" value="PRK00216.1-5"/>
    <property type="match status" value="1"/>
</dbReference>
<dbReference type="PANTHER" id="PTHR43591:SF24">
    <property type="entry name" value="2-METHOXY-6-POLYPRENYL-1,4-BENZOQUINOL METHYLASE, MITOCHONDRIAL"/>
    <property type="match status" value="1"/>
</dbReference>
<dbReference type="PANTHER" id="PTHR43591">
    <property type="entry name" value="METHYLTRANSFERASE"/>
    <property type="match status" value="1"/>
</dbReference>
<dbReference type="Pfam" id="PF01209">
    <property type="entry name" value="Ubie_methyltran"/>
    <property type="match status" value="1"/>
</dbReference>
<dbReference type="SUPFAM" id="SSF53335">
    <property type="entry name" value="S-adenosyl-L-methionine-dependent methyltransferases"/>
    <property type="match status" value="1"/>
</dbReference>
<dbReference type="PROSITE" id="PS51608">
    <property type="entry name" value="SAM_MT_UBIE"/>
    <property type="match status" value="1"/>
</dbReference>
<dbReference type="PROSITE" id="PS01183">
    <property type="entry name" value="UBIE_1"/>
    <property type="match status" value="1"/>
</dbReference>
<dbReference type="PROSITE" id="PS01184">
    <property type="entry name" value="UBIE_2"/>
    <property type="match status" value="1"/>
</dbReference>
<keyword id="KW-0474">Menaquinone biosynthesis</keyword>
<keyword id="KW-0489">Methyltransferase</keyword>
<keyword id="KW-0949">S-adenosyl-L-methionine</keyword>
<keyword id="KW-0808">Transferase</keyword>
<protein>
    <recommendedName>
        <fullName evidence="1">Demethylmenaquinone methyltransferase</fullName>
        <ecNumber evidence="1">2.1.1.163</ecNumber>
    </recommendedName>
</protein>
<sequence>MQESKEQRVHGVFEKIYKNYDQMNSVISFQQHKKWRDKTMQIMNVKEGAKALDVCCGTADWTIALAEAAGKSGEIKGLDFSKNMLSIGEKKVKEGGYSQIELLHGNAMELPFADDSFDFVTIGFGLRNVPDYLTVLKEMRRVVKPGGQVVCLETSQPEMFGFRQAYFLYFKYIMPFFGKMFAKSYKEYSWLQESAREFPGMKELARLFEEAGLTNVKYHSFTGGVAATHIGWK</sequence>
<gene>
    <name evidence="1" type="primary">menG</name>
    <name type="ordered locus">RBAM_020910</name>
</gene>
<feature type="chain" id="PRO_1000056216" description="Demethylmenaquinone methyltransferase">
    <location>
        <begin position="1"/>
        <end position="233"/>
    </location>
</feature>
<feature type="binding site" evidence="1">
    <location>
        <position position="58"/>
    </location>
    <ligand>
        <name>S-adenosyl-L-methionine</name>
        <dbReference type="ChEBI" id="CHEBI:59789"/>
    </ligand>
</feature>
<feature type="binding site" evidence="1">
    <location>
        <position position="79"/>
    </location>
    <ligand>
        <name>S-adenosyl-L-methionine</name>
        <dbReference type="ChEBI" id="CHEBI:59789"/>
    </ligand>
</feature>
<feature type="binding site" evidence="1">
    <location>
        <begin position="106"/>
        <end position="107"/>
    </location>
    <ligand>
        <name>S-adenosyl-L-methionine</name>
        <dbReference type="ChEBI" id="CHEBI:59789"/>
    </ligand>
</feature>
<accession>A7Z627</accession>
<evidence type="ECO:0000255" key="1">
    <source>
        <dbReference type="HAMAP-Rule" id="MF_01813"/>
    </source>
</evidence>
<comment type="function">
    <text evidence="1">Methyltransferase required for the conversion of demethylmenaquinol (DMKH2) to menaquinol (MKH2).</text>
</comment>
<comment type="catalytic activity">
    <reaction evidence="1">
        <text>a 2-demethylmenaquinol + S-adenosyl-L-methionine = a menaquinol + S-adenosyl-L-homocysteine + H(+)</text>
        <dbReference type="Rhea" id="RHEA:42640"/>
        <dbReference type="Rhea" id="RHEA-COMP:9539"/>
        <dbReference type="Rhea" id="RHEA-COMP:9563"/>
        <dbReference type="ChEBI" id="CHEBI:15378"/>
        <dbReference type="ChEBI" id="CHEBI:18151"/>
        <dbReference type="ChEBI" id="CHEBI:55437"/>
        <dbReference type="ChEBI" id="CHEBI:57856"/>
        <dbReference type="ChEBI" id="CHEBI:59789"/>
        <dbReference type="EC" id="2.1.1.163"/>
    </reaction>
</comment>
<comment type="pathway">
    <text evidence="1">Quinol/quinone metabolism; menaquinone biosynthesis; menaquinol from 1,4-dihydroxy-2-naphthoate: step 2/2.</text>
</comment>
<comment type="similarity">
    <text evidence="1">Belongs to the class I-like SAM-binding methyltransferase superfamily. MenG/UbiE family.</text>
</comment>
<name>MENG_BACVZ</name>
<proteinExistence type="inferred from homology"/>
<reference key="1">
    <citation type="journal article" date="2007" name="Nat. Biotechnol.">
        <title>Comparative analysis of the complete genome sequence of the plant growth-promoting bacterium Bacillus amyloliquefaciens FZB42.</title>
        <authorList>
            <person name="Chen X.H."/>
            <person name="Koumoutsi A."/>
            <person name="Scholz R."/>
            <person name="Eisenreich A."/>
            <person name="Schneider K."/>
            <person name="Heinemeyer I."/>
            <person name="Morgenstern B."/>
            <person name="Voss B."/>
            <person name="Hess W.R."/>
            <person name="Reva O."/>
            <person name="Junge H."/>
            <person name="Voigt B."/>
            <person name="Jungblut P.R."/>
            <person name="Vater J."/>
            <person name="Suessmuth R."/>
            <person name="Liesegang H."/>
            <person name="Strittmatter A."/>
            <person name="Gottschalk G."/>
            <person name="Borriss R."/>
        </authorList>
    </citation>
    <scope>NUCLEOTIDE SEQUENCE [LARGE SCALE GENOMIC DNA]</scope>
    <source>
        <strain>DSM 23117 / BGSC 10A6 / LMG 26770 / FZB42</strain>
    </source>
</reference>
<organism>
    <name type="scientific">Bacillus velezensis (strain DSM 23117 / BGSC 10A6 / LMG 26770 / FZB42)</name>
    <name type="common">Bacillus amyloliquefaciens subsp. plantarum</name>
    <dbReference type="NCBI Taxonomy" id="326423"/>
    <lineage>
        <taxon>Bacteria</taxon>
        <taxon>Bacillati</taxon>
        <taxon>Bacillota</taxon>
        <taxon>Bacilli</taxon>
        <taxon>Bacillales</taxon>
        <taxon>Bacillaceae</taxon>
        <taxon>Bacillus</taxon>
        <taxon>Bacillus amyloliquefaciens group</taxon>
    </lineage>
</organism>